<sequence>MKLSDIADNAGARKKRMRVGRGIGSGKGKTSGRGGKGQTARSGVRIKGFEGGQMPMHRRLPKRGFNNIFALDFVEINLDRIQQAIDAKKLDAGSVINAESLVKSGALRRSKDGVRLLGRGELKAKINIEVYGASKSAIAAVEKAGGTVKILAPAKDEGEAA</sequence>
<dbReference type="EMBL" id="CU234118">
    <property type="protein sequence ID" value="CAL76887.1"/>
    <property type="molecule type" value="Genomic_DNA"/>
</dbReference>
<dbReference type="RefSeq" id="WP_011926057.1">
    <property type="nucleotide sequence ID" value="NC_009445.1"/>
</dbReference>
<dbReference type="SMR" id="A4YSL1"/>
<dbReference type="STRING" id="114615.BRADO3085"/>
<dbReference type="KEGG" id="bra:BRADO3085"/>
<dbReference type="eggNOG" id="COG0200">
    <property type="taxonomic scope" value="Bacteria"/>
</dbReference>
<dbReference type="HOGENOM" id="CLU_055188_4_0_5"/>
<dbReference type="OrthoDB" id="9810293at2"/>
<dbReference type="Proteomes" id="UP000001994">
    <property type="component" value="Chromosome"/>
</dbReference>
<dbReference type="GO" id="GO:0022625">
    <property type="term" value="C:cytosolic large ribosomal subunit"/>
    <property type="evidence" value="ECO:0007669"/>
    <property type="project" value="TreeGrafter"/>
</dbReference>
<dbReference type="GO" id="GO:0019843">
    <property type="term" value="F:rRNA binding"/>
    <property type="evidence" value="ECO:0007669"/>
    <property type="project" value="UniProtKB-UniRule"/>
</dbReference>
<dbReference type="GO" id="GO:0003735">
    <property type="term" value="F:structural constituent of ribosome"/>
    <property type="evidence" value="ECO:0007669"/>
    <property type="project" value="InterPro"/>
</dbReference>
<dbReference type="GO" id="GO:0006412">
    <property type="term" value="P:translation"/>
    <property type="evidence" value="ECO:0007669"/>
    <property type="project" value="UniProtKB-UniRule"/>
</dbReference>
<dbReference type="Gene3D" id="3.100.10.10">
    <property type="match status" value="1"/>
</dbReference>
<dbReference type="HAMAP" id="MF_01341">
    <property type="entry name" value="Ribosomal_uL15"/>
    <property type="match status" value="1"/>
</dbReference>
<dbReference type="InterPro" id="IPR030878">
    <property type="entry name" value="Ribosomal_uL15"/>
</dbReference>
<dbReference type="InterPro" id="IPR021131">
    <property type="entry name" value="Ribosomal_uL15/eL18"/>
</dbReference>
<dbReference type="InterPro" id="IPR036227">
    <property type="entry name" value="Ribosomal_uL15/eL18_sf"/>
</dbReference>
<dbReference type="InterPro" id="IPR005749">
    <property type="entry name" value="Ribosomal_uL15_bac-type"/>
</dbReference>
<dbReference type="InterPro" id="IPR001196">
    <property type="entry name" value="Ribosomal_uL15_CS"/>
</dbReference>
<dbReference type="NCBIfam" id="TIGR01071">
    <property type="entry name" value="rplO_bact"/>
    <property type="match status" value="1"/>
</dbReference>
<dbReference type="PANTHER" id="PTHR12934">
    <property type="entry name" value="50S RIBOSOMAL PROTEIN L15"/>
    <property type="match status" value="1"/>
</dbReference>
<dbReference type="PANTHER" id="PTHR12934:SF11">
    <property type="entry name" value="LARGE RIBOSOMAL SUBUNIT PROTEIN UL15M"/>
    <property type="match status" value="1"/>
</dbReference>
<dbReference type="Pfam" id="PF00828">
    <property type="entry name" value="Ribosomal_L27A"/>
    <property type="match status" value="1"/>
</dbReference>
<dbReference type="SUPFAM" id="SSF52080">
    <property type="entry name" value="Ribosomal proteins L15p and L18e"/>
    <property type="match status" value="1"/>
</dbReference>
<dbReference type="PROSITE" id="PS00475">
    <property type="entry name" value="RIBOSOMAL_L15"/>
    <property type="match status" value="1"/>
</dbReference>
<accession>A4YSL1</accession>
<comment type="function">
    <text evidence="1">Binds to the 23S rRNA.</text>
</comment>
<comment type="subunit">
    <text evidence="1">Part of the 50S ribosomal subunit.</text>
</comment>
<comment type="similarity">
    <text evidence="1">Belongs to the universal ribosomal protein uL15 family.</text>
</comment>
<evidence type="ECO:0000255" key="1">
    <source>
        <dbReference type="HAMAP-Rule" id="MF_01341"/>
    </source>
</evidence>
<evidence type="ECO:0000256" key="2">
    <source>
        <dbReference type="SAM" id="MobiDB-lite"/>
    </source>
</evidence>
<evidence type="ECO:0000305" key="3"/>
<reference key="1">
    <citation type="journal article" date="2007" name="Science">
        <title>Legumes symbioses: absence of nod genes in photosynthetic bradyrhizobia.</title>
        <authorList>
            <person name="Giraud E."/>
            <person name="Moulin L."/>
            <person name="Vallenet D."/>
            <person name="Barbe V."/>
            <person name="Cytryn E."/>
            <person name="Avarre J.-C."/>
            <person name="Jaubert M."/>
            <person name="Simon D."/>
            <person name="Cartieaux F."/>
            <person name="Prin Y."/>
            <person name="Bena G."/>
            <person name="Hannibal L."/>
            <person name="Fardoux J."/>
            <person name="Kojadinovic M."/>
            <person name="Vuillet L."/>
            <person name="Lajus A."/>
            <person name="Cruveiller S."/>
            <person name="Rouy Z."/>
            <person name="Mangenot S."/>
            <person name="Segurens B."/>
            <person name="Dossat C."/>
            <person name="Franck W.L."/>
            <person name="Chang W.-S."/>
            <person name="Saunders E."/>
            <person name="Bruce D."/>
            <person name="Richardson P."/>
            <person name="Normand P."/>
            <person name="Dreyfus B."/>
            <person name="Pignol D."/>
            <person name="Stacey G."/>
            <person name="Emerich D."/>
            <person name="Vermeglio A."/>
            <person name="Medigue C."/>
            <person name="Sadowsky M."/>
        </authorList>
    </citation>
    <scope>NUCLEOTIDE SEQUENCE [LARGE SCALE GENOMIC DNA]</scope>
    <source>
        <strain>ORS 278</strain>
    </source>
</reference>
<protein>
    <recommendedName>
        <fullName evidence="1">Large ribosomal subunit protein uL15</fullName>
    </recommendedName>
    <alternativeName>
        <fullName evidence="3">50S ribosomal protein L15</fullName>
    </alternativeName>
</protein>
<keyword id="KW-1185">Reference proteome</keyword>
<keyword id="KW-0687">Ribonucleoprotein</keyword>
<keyword id="KW-0689">Ribosomal protein</keyword>
<keyword id="KW-0694">RNA-binding</keyword>
<keyword id="KW-0699">rRNA-binding</keyword>
<feature type="chain" id="PRO_1000054432" description="Large ribosomal subunit protein uL15">
    <location>
        <begin position="1"/>
        <end position="161"/>
    </location>
</feature>
<feature type="region of interest" description="Disordered" evidence="2">
    <location>
        <begin position="1"/>
        <end position="43"/>
    </location>
</feature>
<feature type="compositionally biased region" description="Gly residues" evidence="2">
    <location>
        <begin position="21"/>
        <end position="37"/>
    </location>
</feature>
<organism>
    <name type="scientific">Bradyrhizobium sp. (strain ORS 278)</name>
    <dbReference type="NCBI Taxonomy" id="114615"/>
    <lineage>
        <taxon>Bacteria</taxon>
        <taxon>Pseudomonadati</taxon>
        <taxon>Pseudomonadota</taxon>
        <taxon>Alphaproteobacteria</taxon>
        <taxon>Hyphomicrobiales</taxon>
        <taxon>Nitrobacteraceae</taxon>
        <taxon>Bradyrhizobium</taxon>
    </lineage>
</organism>
<proteinExistence type="inferred from homology"/>
<gene>
    <name evidence="1" type="primary">rplO</name>
    <name type="ordered locus">BRADO3085</name>
</gene>
<name>RL15_BRASO</name>